<feature type="transit peptide" description="Chloroplast" evidence="3">
    <location>
        <begin position="1"/>
        <end position="33"/>
    </location>
</feature>
<feature type="chain" id="PRO_0000014454" description="3-isopropylmalate dehydrogenase 2, chloroplastic">
    <location>
        <begin position="34"/>
        <end position="405"/>
    </location>
</feature>
<feature type="binding site" evidence="7 17">
    <location>
        <begin position="114"/>
        <end position="129"/>
    </location>
    <ligand>
        <name>NAD(+)</name>
        <dbReference type="ChEBI" id="CHEBI:57540"/>
    </ligand>
</feature>
<feature type="binding site" evidence="7 16">
    <location>
        <position position="136"/>
    </location>
    <ligand>
        <name>substrate</name>
    </ligand>
</feature>
<feature type="binding site" evidence="7 16">
    <location>
        <position position="146"/>
    </location>
    <ligand>
        <name>substrate</name>
    </ligand>
</feature>
<feature type="binding site" evidence="7 16">
    <location>
        <position position="174"/>
    </location>
    <ligand>
        <name>substrate</name>
    </ligand>
</feature>
<feature type="binding site" evidence="7 17">
    <location>
        <position position="234"/>
    </location>
    <ligand>
        <name>NAD(+)</name>
        <dbReference type="ChEBI" id="CHEBI:57540"/>
    </ligand>
</feature>
<feature type="binding site" evidence="7 16 17 18">
    <location>
        <position position="264"/>
    </location>
    <ligand>
        <name>Mg(2+)</name>
        <dbReference type="ChEBI" id="CHEBI:18420"/>
    </ligand>
</feature>
<feature type="binding site" evidence="7 16">
    <location>
        <position position="264"/>
    </location>
    <ligand>
        <name>substrate</name>
    </ligand>
</feature>
<feature type="binding site" evidence="7 17">
    <location>
        <position position="265"/>
    </location>
    <ligand>
        <name>NAD(+)</name>
        <dbReference type="ChEBI" id="CHEBI:57540"/>
    </ligand>
</feature>
<feature type="binding site" evidence="7 16 17 18">
    <location>
        <position position="288"/>
    </location>
    <ligand>
        <name>Mg(2+)</name>
        <dbReference type="ChEBI" id="CHEBI:18420"/>
    </ligand>
</feature>
<feature type="binding site" evidence="7 16 17 18">
    <location>
        <position position="292"/>
    </location>
    <ligand>
        <name>Mg(2+)</name>
        <dbReference type="ChEBI" id="CHEBI:18420"/>
    </ligand>
</feature>
<feature type="binding site" evidence="7 17">
    <location>
        <begin position="318"/>
        <end position="334"/>
    </location>
    <ligand>
        <name>NAD(+)</name>
        <dbReference type="ChEBI" id="CHEBI:57540"/>
    </ligand>
</feature>
<feature type="site" description="Confers substrate specificity" evidence="6">
    <location>
        <position position="133"/>
    </location>
</feature>
<feature type="site" description="Important for catalysis" evidence="7">
    <location>
        <position position="181"/>
    </location>
</feature>
<feature type="site" description="Essential for redox regulation" evidence="2">
    <location>
        <position position="228"/>
    </location>
</feature>
<feature type="site" description="Important for catalysis" evidence="7">
    <location>
        <position position="232"/>
    </location>
</feature>
<feature type="site" description="Essential for redox regulation" evidence="2">
    <location>
        <position position="386"/>
    </location>
</feature>
<feature type="modified residue" description="Phosphoserine" evidence="2">
    <location>
        <position position="70"/>
    </location>
</feature>
<feature type="mutagenesis site" description="Reduced activity toward 3-isopropylmalate." evidence="7">
    <original>L</original>
    <variation>A</variation>
    <location>
        <position position="132"/>
    </location>
</feature>
<feature type="mutagenesis site" description="Reduced activity toward 3-isopropylmalate." evidence="7">
    <original>L</original>
    <variation>A</variation>
    <location>
        <position position="133"/>
    </location>
</feature>
<feature type="mutagenesis site" description="Enhanced activity toward 3-(2'-methylthio)-ethylmalate, but reduced catalytic efficiency with 3-isopropylmalate." evidence="6">
    <original>L</original>
    <variation>F</variation>
    <location>
        <position position="133"/>
    </location>
</feature>
<feature type="mutagenesis site" description="Loss of activity toward 3-isopropylmalate." evidence="7">
    <original>R</original>
    <variation>A</variation>
    <location>
        <position position="136"/>
    </location>
</feature>
<feature type="mutagenesis site" description="Reduced activity toward 3-isopropylmalate." evidence="7">
    <original>R</original>
    <variation>K</variation>
    <location>
        <position position="136"/>
    </location>
</feature>
<feature type="mutagenesis site" description="Reduced activity toward 3-isopropylmalate." evidence="7">
    <original>R</original>
    <variation>A</variation>
    <location>
        <position position="146"/>
    </location>
</feature>
<feature type="mutagenesis site" description="Reduced activity toward 3-isopropylmalate." evidence="7">
    <original>R</original>
    <variation>K</variation>
    <location>
        <position position="146"/>
    </location>
</feature>
<feature type="mutagenesis site" description="Loss of activity toward 3-isopropylmalate." evidence="7">
    <original>R</original>
    <variation>A</variation>
    <location>
        <position position="174"/>
    </location>
</feature>
<feature type="mutagenesis site" description="Reduced activity toward 3-isopropylmalate." evidence="7">
    <original>R</original>
    <variation>K</variation>
    <location>
        <position position="174"/>
    </location>
</feature>
<feature type="mutagenesis site" description="Reduced activity toward 3-isopropylmalate." evidence="7">
    <original>Y</original>
    <variation>A</variation>
    <variation>F</variation>
    <variation>H</variation>
    <location>
        <position position="181"/>
    </location>
</feature>
<feature type="mutagenesis site" description="Loss of activity toward 3-isopropylmalate." evidence="7">
    <original>K</original>
    <variation>M</variation>
    <location>
        <position position="232"/>
    </location>
</feature>
<feature type="mutagenesis site" description="Loss of activity toward 3-isopropylmalate." evidence="7">
    <original>N</original>
    <variation>A</variation>
    <variation>D</variation>
    <location>
        <position position="234"/>
    </location>
</feature>
<feature type="mutagenesis site" description="Reduced activity toward 3-isopropylmalate." evidence="7">
    <original>V</original>
    <variation>A</variation>
    <location>
        <position position="235"/>
    </location>
</feature>
<feature type="mutagenesis site" description="Loss of activity toward 3-isopropylmalate." evidence="7">
    <original>D</original>
    <variation>N</variation>
    <location>
        <position position="264"/>
    </location>
</feature>
<feature type="mutagenesis site" description="Loss of activity toward 3-isopropylmalate." evidence="7">
    <original>D</original>
    <variation>N</variation>
    <location>
        <position position="288"/>
    </location>
</feature>
<feature type="mutagenesis site" description="Reduced activity toward 3-isopropylmalate." evidence="7">
    <original>D</original>
    <variation>N</variation>
    <location>
        <position position="292"/>
    </location>
</feature>
<feature type="sequence conflict" description="In Ref. 5; AAL32519/AAM47946." evidence="13" ref="5">
    <original>T</original>
    <variation>K</variation>
    <location>
        <position position="177"/>
    </location>
</feature>
<feature type="strand" evidence="20">
    <location>
        <begin position="42"/>
        <end position="51"/>
    </location>
</feature>
<feature type="helix" evidence="20">
    <location>
        <begin position="54"/>
        <end position="70"/>
    </location>
</feature>
<feature type="turn" evidence="20">
    <location>
        <begin position="71"/>
        <end position="73"/>
    </location>
</feature>
<feature type="strand" evidence="20">
    <location>
        <begin position="75"/>
        <end position="80"/>
    </location>
</feature>
<feature type="helix" evidence="20">
    <location>
        <begin position="85"/>
        <end position="90"/>
    </location>
</feature>
<feature type="strand" evidence="20">
    <location>
        <begin position="92"/>
        <end position="95"/>
    </location>
</feature>
<feature type="helix" evidence="20">
    <location>
        <begin position="97"/>
        <end position="104"/>
    </location>
</feature>
<feature type="strand" evidence="20">
    <location>
        <begin position="106"/>
        <end position="113"/>
    </location>
</feature>
<feature type="helix" evidence="20">
    <location>
        <begin position="117"/>
        <end position="119"/>
    </location>
</feature>
<feature type="helix" evidence="20">
    <location>
        <begin position="124"/>
        <end position="126"/>
    </location>
</feature>
<feature type="helix" evidence="20">
    <location>
        <begin position="128"/>
        <end position="138"/>
    </location>
</feature>
<feature type="strand" evidence="20">
    <location>
        <begin position="143"/>
        <end position="149"/>
    </location>
</feature>
<feature type="helix" evidence="20">
    <location>
        <begin position="152"/>
        <end position="157"/>
    </location>
</feature>
<feature type="strand" evidence="20">
    <location>
        <begin position="158"/>
        <end position="160"/>
    </location>
</feature>
<feature type="helix" evidence="20">
    <location>
        <begin position="162"/>
        <end position="165"/>
    </location>
</feature>
<feature type="strand" evidence="20">
    <location>
        <begin position="169"/>
        <end position="175"/>
    </location>
</feature>
<feature type="strand" evidence="19">
    <location>
        <begin position="177"/>
        <end position="179"/>
    </location>
</feature>
<feature type="turn" evidence="20">
    <location>
        <begin position="180"/>
        <end position="182"/>
    </location>
</feature>
<feature type="strand" evidence="20">
    <location>
        <begin position="187"/>
        <end position="190"/>
    </location>
</feature>
<feature type="strand" evidence="20">
    <location>
        <begin position="192"/>
        <end position="194"/>
    </location>
</feature>
<feature type="strand" evidence="20">
    <location>
        <begin position="196"/>
        <end position="205"/>
    </location>
</feature>
<feature type="helix" evidence="20">
    <location>
        <begin position="206"/>
        <end position="221"/>
    </location>
</feature>
<feature type="turn" evidence="20">
    <location>
        <begin position="222"/>
        <end position="224"/>
    </location>
</feature>
<feature type="strand" evidence="20">
    <location>
        <begin position="225"/>
        <end position="231"/>
    </location>
</feature>
<feature type="turn" evidence="20">
    <location>
        <begin position="233"/>
        <end position="235"/>
    </location>
</feature>
<feature type="helix" evidence="20">
    <location>
        <begin position="237"/>
        <end position="249"/>
    </location>
</feature>
<feature type="helix" evidence="20">
    <location>
        <begin position="250"/>
        <end position="252"/>
    </location>
</feature>
<feature type="strand" evidence="20">
    <location>
        <begin position="256"/>
        <end position="262"/>
    </location>
</feature>
<feature type="helix" evidence="20">
    <location>
        <begin position="263"/>
        <end position="272"/>
    </location>
</feature>
<feature type="helix" evidence="20">
    <location>
        <begin position="274"/>
        <end position="276"/>
    </location>
</feature>
<feature type="strand" evidence="20">
    <location>
        <begin position="278"/>
        <end position="282"/>
    </location>
</feature>
<feature type="helix" evidence="20">
    <location>
        <begin position="284"/>
        <end position="298"/>
    </location>
</feature>
<feature type="helix" evidence="20">
    <location>
        <begin position="301"/>
        <end position="303"/>
    </location>
</feature>
<feature type="strand" evidence="20">
    <location>
        <begin position="307"/>
        <end position="309"/>
    </location>
</feature>
<feature type="strand" evidence="20">
    <location>
        <begin position="311"/>
        <end position="313"/>
    </location>
</feature>
<feature type="strand" evidence="20">
    <location>
        <begin position="315"/>
        <end position="317"/>
    </location>
</feature>
<feature type="helix" evidence="20">
    <location>
        <begin position="325"/>
        <end position="327"/>
    </location>
</feature>
<feature type="turn" evidence="20">
    <location>
        <begin position="328"/>
        <end position="331"/>
    </location>
</feature>
<feature type="helix" evidence="20">
    <location>
        <begin position="336"/>
        <end position="348"/>
    </location>
</feature>
<feature type="helix" evidence="20">
    <location>
        <begin position="353"/>
        <end position="368"/>
    </location>
</feature>
<feature type="helix" evidence="20">
    <location>
        <begin position="374"/>
        <end position="376"/>
    </location>
</feature>
<feature type="strand" evidence="20">
    <location>
        <begin position="381"/>
        <end position="383"/>
    </location>
</feature>
<feature type="helix" evidence="20">
    <location>
        <begin position="386"/>
        <end position="398"/>
    </location>
</feature>
<comment type="function">
    <text evidence="4 5 6">Involved in leucine biosynthesis; catalyzes the oxidative decarboxylation step in leucine biosynthesis (primary metabolism) (PubMed:21697089). Catalyzes the oxidation of 3-carboxy-2-hydroxy-4-methylpentanoate (3-isopropylmalate, 3-IPM) to 3-carboxy-4-methyl-2-oxopentanoate. The product decarboxylates to 4-methyl-2 oxopentanoate (PubMed:15849421, PubMed:20840499). Required during pollen development and involved in embryo sac development (PubMed:20840499).</text>
</comment>
<comment type="catalytic activity">
    <reaction evidence="4 5">
        <text>(2R,3S)-3-isopropylmalate + NAD(+) = 4-methyl-2-oxopentanoate + CO2 + NADH</text>
        <dbReference type="Rhea" id="RHEA:32271"/>
        <dbReference type="ChEBI" id="CHEBI:16526"/>
        <dbReference type="ChEBI" id="CHEBI:17865"/>
        <dbReference type="ChEBI" id="CHEBI:35121"/>
        <dbReference type="ChEBI" id="CHEBI:57540"/>
        <dbReference type="ChEBI" id="CHEBI:57945"/>
        <dbReference type="EC" id="1.1.1.85"/>
    </reaction>
</comment>
<comment type="cofactor">
    <cofactor evidence="7">
        <name>Mg(2+)</name>
        <dbReference type="ChEBI" id="CHEBI:18420"/>
    </cofactor>
    <cofactor evidence="1">
        <name>Mn(2+)</name>
        <dbReference type="ChEBI" id="CHEBI:29035"/>
    </cofactor>
    <text evidence="1">Binds 1 Mg(2+) or Mn(2+) ion per subunit.</text>
</comment>
<comment type="activity regulation">
    <text evidence="2">Regulated by a thiol-based redox modification.</text>
</comment>
<comment type="biophysicochemical properties">
    <kinetics>
        <KM evidence="7">3.5 uM for 3-isopropylmalate (at pH 7.5 and 25 degrees Celsius)</KM>
        <KM evidence="5 6">10.9 uM for 3-isopropylmalate (at pH 7.5)</KM>
        <KM evidence="6">435 uM for 3-(2'-methylthio)ethylmalate (at pH 7.5)</KM>
        <Vmax evidence="5">4.05 umol/min/mg enzyme with 3-isopropylmalate as substrate (at pH 7.5)</Vmax>
        <text evidence="5 6 7">kcat is 373 min(-1) with 3-isopropylmalate as substrate (at pH 7.5) (PubMed:20840499, PubMed:21697089). kcat is 274 min(-1) with 3-isopropylmalate as substrate (at pH 7.5 and 25 degrees Celsius) (PubMed:27137927). kcat is 1 min(-1) with 3-(2'-methylthio)ethylmalate as substrate (at pH 7.5) (PubMed:21697089).</text>
    </kinetics>
</comment>
<comment type="pathway">
    <text evidence="4 5">Amino-acid biosynthesis; L-leucine biosynthesis; L-leucine from 3-methyl-2-oxobutanoate: step 3/4.</text>
</comment>
<comment type="subunit">
    <text evidence="6">Homodimer.</text>
</comment>
<comment type="subcellular location">
    <subcellularLocation>
        <location evidence="2">Plastid</location>
        <location evidence="2">Chloroplast stroma</location>
    </subcellularLocation>
</comment>
<comment type="tissue specificity">
    <text evidence="4 5 6">Expressed at low levels in seedlings, cotyledons, hypocotyls, flowers, roots, pollen, leaves and stems.</text>
</comment>
<comment type="disruption phenotype">
    <text evidence="5">No discernible vegetative or reproductive phenotypes except a slight reduction of both male and female transmission efficiency, but decreased leucine biosynthetic enzyme activities and lower free leucine concentrations. The double mutant ipmdh2 ipmdh3 is lethal in male gametophytes (small aborted pollen grains abnormal in cellular structure, and arrested in germination) and had reduced transmission through female gametophytes (slow embryo sacs development).</text>
</comment>
<comment type="similarity">
    <text evidence="13">Belongs to the isocitrate and isopropylmalate dehydrogenases family.</text>
</comment>
<organism>
    <name type="scientific">Arabidopsis thaliana</name>
    <name type="common">Mouse-ear cress</name>
    <dbReference type="NCBI Taxonomy" id="3702"/>
    <lineage>
        <taxon>Eukaryota</taxon>
        <taxon>Viridiplantae</taxon>
        <taxon>Streptophyta</taxon>
        <taxon>Embryophyta</taxon>
        <taxon>Tracheophyta</taxon>
        <taxon>Spermatophyta</taxon>
        <taxon>Magnoliopsida</taxon>
        <taxon>eudicotyledons</taxon>
        <taxon>Gunneridae</taxon>
        <taxon>Pentapetalae</taxon>
        <taxon>rosids</taxon>
        <taxon>malvids</taxon>
        <taxon>Brassicales</taxon>
        <taxon>Brassicaceae</taxon>
        <taxon>Camelineae</taxon>
        <taxon>Arabidopsis</taxon>
    </lineage>
</organism>
<accession>P93832</accession>
<accession>Q540Z4</accession>
<accession>Q8W4P6</accession>
<protein>
    <recommendedName>
        <fullName evidence="8">3-isopropylmalate dehydrogenase 2, chloroplastic</fullName>
        <shortName evidence="8">3-IPM-DH 2</shortName>
        <shortName evidence="8">AtIMDH2</shortName>
        <shortName evidence="10">AtIMDH3</shortName>
        <shortName evidence="8">IMDH 2</shortName>
        <ecNumber evidence="4 5">1.1.1.85</ecNumber>
    </recommendedName>
    <alternativeName>
        <fullName evidence="8">Beta-IPM dehydrogenase 2</fullName>
    </alternativeName>
    <alternativeName>
        <fullName evidence="9">Isopropylmalate dehydrogenase 2</fullName>
        <shortName evidence="9">AtIMD2</shortName>
    </alternativeName>
</protein>
<proteinExistence type="evidence at protein level"/>
<reference key="1">
    <citation type="submission" date="1996-12" db="EMBL/GenBank/DDBJ databases">
        <authorList>
            <person name="Salchert K.D."/>
        </authorList>
    </citation>
    <scope>NUCLEOTIDE SEQUENCE [MRNA]</scope>
    <source>
        <strain>cv. Columbia</strain>
    </source>
</reference>
<reference key="2">
    <citation type="journal article" date="2005" name="Biosci. Biotechnol. Biochem.">
        <title>Cloning of cDNAs encoding isopropylmalate dehydrogenase from Arabidopsis thaliana and accumulation patterns of their transcripts.</title>
        <authorList>
            <person name="Nozawa A."/>
            <person name="Takano J."/>
            <person name="Miwa K."/>
            <person name="Nakagawa Y."/>
            <person name="Fujiwara T."/>
        </authorList>
    </citation>
    <scope>NUCLEOTIDE SEQUENCE [MRNA]</scope>
    <scope>FUNCTION</scope>
    <scope>CATALYTIC ACTIVITY</scope>
    <scope>PATHWAY</scope>
    <scope>TISSUE SPECIFICITY</scope>
    <scope>GENE FAMILY</scope>
    <scope>NOMENCLATURE</scope>
    <source>
        <strain>cv. Columbia</strain>
    </source>
</reference>
<reference key="3">
    <citation type="journal article" date="2000" name="Nature">
        <title>Sequence and analysis of chromosome 1 of the plant Arabidopsis thaliana.</title>
        <authorList>
            <person name="Theologis A."/>
            <person name="Ecker J.R."/>
            <person name="Palm C.J."/>
            <person name="Federspiel N.A."/>
            <person name="Kaul S."/>
            <person name="White O."/>
            <person name="Alonso J."/>
            <person name="Altafi H."/>
            <person name="Araujo R."/>
            <person name="Bowman C.L."/>
            <person name="Brooks S.Y."/>
            <person name="Buehler E."/>
            <person name="Chan A."/>
            <person name="Chao Q."/>
            <person name="Chen H."/>
            <person name="Cheuk R.F."/>
            <person name="Chin C.W."/>
            <person name="Chung M.K."/>
            <person name="Conn L."/>
            <person name="Conway A.B."/>
            <person name="Conway A.R."/>
            <person name="Creasy T.H."/>
            <person name="Dewar K."/>
            <person name="Dunn P."/>
            <person name="Etgu P."/>
            <person name="Feldblyum T.V."/>
            <person name="Feng J.-D."/>
            <person name="Fong B."/>
            <person name="Fujii C.Y."/>
            <person name="Gill J.E."/>
            <person name="Goldsmith A.D."/>
            <person name="Haas B."/>
            <person name="Hansen N.F."/>
            <person name="Hughes B."/>
            <person name="Huizar L."/>
            <person name="Hunter J.L."/>
            <person name="Jenkins J."/>
            <person name="Johnson-Hopson C."/>
            <person name="Khan S."/>
            <person name="Khaykin E."/>
            <person name="Kim C.J."/>
            <person name="Koo H.L."/>
            <person name="Kremenetskaia I."/>
            <person name="Kurtz D.B."/>
            <person name="Kwan A."/>
            <person name="Lam B."/>
            <person name="Langin-Hooper S."/>
            <person name="Lee A."/>
            <person name="Lee J.M."/>
            <person name="Lenz C.A."/>
            <person name="Li J.H."/>
            <person name="Li Y.-P."/>
            <person name="Lin X."/>
            <person name="Liu S.X."/>
            <person name="Liu Z.A."/>
            <person name="Luros J.S."/>
            <person name="Maiti R."/>
            <person name="Marziali A."/>
            <person name="Militscher J."/>
            <person name="Miranda M."/>
            <person name="Nguyen M."/>
            <person name="Nierman W.C."/>
            <person name="Osborne B.I."/>
            <person name="Pai G."/>
            <person name="Peterson J."/>
            <person name="Pham P.K."/>
            <person name="Rizzo M."/>
            <person name="Rooney T."/>
            <person name="Rowley D."/>
            <person name="Sakano H."/>
            <person name="Salzberg S.L."/>
            <person name="Schwartz J.R."/>
            <person name="Shinn P."/>
            <person name="Southwick A.M."/>
            <person name="Sun H."/>
            <person name="Tallon L.J."/>
            <person name="Tambunga G."/>
            <person name="Toriumi M.J."/>
            <person name="Town C.D."/>
            <person name="Utterback T."/>
            <person name="Van Aken S."/>
            <person name="Vaysberg M."/>
            <person name="Vysotskaia V.S."/>
            <person name="Walker M."/>
            <person name="Wu D."/>
            <person name="Yu G."/>
            <person name="Fraser C.M."/>
            <person name="Venter J.C."/>
            <person name="Davis R.W."/>
        </authorList>
    </citation>
    <scope>NUCLEOTIDE SEQUENCE [LARGE SCALE GENOMIC DNA]</scope>
    <source>
        <strain>cv. Columbia</strain>
    </source>
</reference>
<reference key="4">
    <citation type="journal article" date="2017" name="Plant J.">
        <title>Araport11: a complete reannotation of the Arabidopsis thaliana reference genome.</title>
        <authorList>
            <person name="Cheng C.Y."/>
            <person name="Krishnakumar V."/>
            <person name="Chan A.P."/>
            <person name="Thibaud-Nissen F."/>
            <person name="Schobel S."/>
            <person name="Town C.D."/>
        </authorList>
    </citation>
    <scope>GENOME REANNOTATION</scope>
    <source>
        <strain>cv. Columbia</strain>
    </source>
</reference>
<reference key="5">
    <citation type="journal article" date="2003" name="Science">
        <title>Empirical analysis of transcriptional activity in the Arabidopsis genome.</title>
        <authorList>
            <person name="Yamada K."/>
            <person name="Lim J."/>
            <person name="Dale J.M."/>
            <person name="Chen H."/>
            <person name="Shinn P."/>
            <person name="Palm C.J."/>
            <person name="Southwick A.M."/>
            <person name="Wu H.C."/>
            <person name="Kim C.J."/>
            <person name="Nguyen M."/>
            <person name="Pham P.K."/>
            <person name="Cheuk R.F."/>
            <person name="Karlin-Newmann G."/>
            <person name="Liu S.X."/>
            <person name="Lam B."/>
            <person name="Sakano H."/>
            <person name="Wu T."/>
            <person name="Yu G."/>
            <person name="Miranda M."/>
            <person name="Quach H.L."/>
            <person name="Tripp M."/>
            <person name="Chang C.H."/>
            <person name="Lee J.M."/>
            <person name="Toriumi M.J."/>
            <person name="Chan M.M."/>
            <person name="Tang C.C."/>
            <person name="Onodera C.S."/>
            <person name="Deng J.M."/>
            <person name="Akiyama K."/>
            <person name="Ansari Y."/>
            <person name="Arakawa T."/>
            <person name="Banh J."/>
            <person name="Banno F."/>
            <person name="Bowser L."/>
            <person name="Brooks S.Y."/>
            <person name="Carninci P."/>
            <person name="Chao Q."/>
            <person name="Choy N."/>
            <person name="Enju A."/>
            <person name="Goldsmith A.D."/>
            <person name="Gurjal M."/>
            <person name="Hansen N.F."/>
            <person name="Hayashizaki Y."/>
            <person name="Johnson-Hopson C."/>
            <person name="Hsuan V.W."/>
            <person name="Iida K."/>
            <person name="Karnes M."/>
            <person name="Khan S."/>
            <person name="Koesema E."/>
            <person name="Ishida J."/>
            <person name="Jiang P.X."/>
            <person name="Jones T."/>
            <person name="Kawai J."/>
            <person name="Kamiya A."/>
            <person name="Meyers C."/>
            <person name="Nakajima M."/>
            <person name="Narusaka M."/>
            <person name="Seki M."/>
            <person name="Sakurai T."/>
            <person name="Satou M."/>
            <person name="Tamse R."/>
            <person name="Vaysberg M."/>
            <person name="Wallender E.K."/>
            <person name="Wong C."/>
            <person name="Yamamura Y."/>
            <person name="Yuan S."/>
            <person name="Shinozaki K."/>
            <person name="Davis R.W."/>
            <person name="Theologis A."/>
            <person name="Ecker J.R."/>
        </authorList>
    </citation>
    <scope>NUCLEOTIDE SEQUENCE [LARGE SCALE MRNA]</scope>
    <source>
        <strain>cv. Columbia</strain>
    </source>
</reference>
<reference key="6">
    <citation type="journal article" date="2009" name="Plant Cell Physiol.">
        <title>Omics-based approaches to methionine side chain elongation in Arabidopsis: characterization of the genes encoding methylthioalkylmalate isomerase and methylthioalkylmalate dehydrogenase.</title>
        <authorList>
            <person name="Sawada Y."/>
            <person name="Kuwahara A."/>
            <person name="Nagano M."/>
            <person name="Narisawa T."/>
            <person name="Sakata A."/>
            <person name="Saito K."/>
            <person name="Hirai M.Y."/>
        </authorList>
    </citation>
    <scope>GENE FAMILY</scope>
    <scope>NOMENCLATURE</scope>
</reference>
<reference key="7">
    <citation type="journal article" date="2009" name="Plant J.">
        <title>A redox-active isopropylmalate dehydrogenase functions in the biosynthesis of glucosinolates and leucine in Arabidopsis.</title>
        <authorList>
            <person name="He Y."/>
            <person name="Mawhinney T.P."/>
            <person name="Preuss M.L."/>
            <person name="Schroeder A.C."/>
            <person name="Chen B."/>
            <person name="Abraham L."/>
            <person name="Jez J.M."/>
            <person name="Chen S."/>
        </authorList>
    </citation>
    <scope>GENE FAMILY</scope>
</reference>
<reference key="8">
    <citation type="journal article" date="2011" name="New Phytol.">
        <title>Functional characterization of Arabidopsis thaliana isopropylmalate dehydrogenases reveals their important roles in gametophyte development.</title>
        <authorList>
            <person name="He Y."/>
            <person name="Chen L."/>
            <person name="Zhou Y."/>
            <person name="Mawhinney T.P."/>
            <person name="Chen B."/>
            <person name="Kang B.-H."/>
            <person name="Hauser B.A."/>
            <person name="Chen S."/>
        </authorList>
    </citation>
    <scope>FUNCTION</scope>
    <scope>DISRUPTION PHENOTYPE</scope>
    <scope>BIOPHYSICOCHEMICAL PROPERTIES</scope>
    <scope>CATALYTIC ACTIVITY</scope>
    <scope>PATHWAY</scope>
    <scope>TISSUE SPECIFICITY</scope>
    <source>
        <strain>cv. Columbia</strain>
    </source>
</reference>
<reference key="9">
    <citation type="journal article" date="2011" name="J. Biol. Chem.">
        <title>Structural and functional evolution of isopropylmalate dehydrogenases in the leucine and glucosinolate pathways of Arabidopsis thaliana.</title>
        <authorList>
            <person name="He Y."/>
            <person name="Galant A."/>
            <person name="Pang Q."/>
            <person name="Strul J.M."/>
            <person name="Balogun S.F."/>
            <person name="Jez J.M."/>
            <person name="Chen S."/>
        </authorList>
    </citation>
    <scope>X-RAY CRYSTALLOGRAPHY (2.25 ANGSTROMS)</scope>
    <scope>FUNCTION</scope>
    <scope>MUTAGENESIS OF LEU-133</scope>
    <scope>TISSUE SPECIFICITY</scope>
    <scope>SUBUNIT</scope>
    <scope>BIOPHYSICOCHEMICAL PROPERTIES</scope>
    <source>
        <strain>cv. Columbia</strain>
    </source>
</reference>
<reference key="10">
    <citation type="journal article" date="2016" name="J. Biol. Chem.">
        <title>Structure and Mechanism of Isopropylmalate Dehydrogenase from Arabidopsis thaliana: INSIGHTS ON LEUCINE AND ALIPHATIC GLUCOSINOLATE BIOSYNTHESIS.</title>
        <authorList>
            <person name="Lee S.G."/>
            <person name="Nwumeh R."/>
            <person name="Jez J.M."/>
        </authorList>
    </citation>
    <scope>X-RAY CRYSTALLOGRAPHY (1.83 ANGSTROMS) IN COMPLEX WITH MAGNESIUM; NAD AND SUBSTRATE</scope>
    <scope>SITE</scope>
    <scope>MUTAGENESIS OF LEU-132; LEU-133; ARG-136; ARG-146; ARG-174; TYR-181; LYS-232; ASN-234; VAL-235; ASP-264; ASP-288 AND ASP-292</scope>
    <scope>BIOPHYSICOCHEMICAL PROPERTIES</scope>
</reference>
<gene>
    <name evidence="8" type="primary">IMDH2</name>
    <name evidence="9" type="synonym">IMD2</name>
    <name evidence="12" type="synonym">IMDH</name>
    <name evidence="11" type="synonym">IPMDH2</name>
    <name evidence="14" type="ordered locus">At1g80560</name>
    <name evidence="15" type="ORF">T21F11.11</name>
</gene>
<keyword id="KW-0002">3D-structure</keyword>
<keyword id="KW-0028">Amino-acid biosynthesis</keyword>
<keyword id="KW-0100">Branched-chain amino acid biosynthesis</keyword>
<keyword id="KW-0150">Chloroplast</keyword>
<keyword id="KW-0432">Leucine biosynthesis</keyword>
<keyword id="KW-0460">Magnesium</keyword>
<keyword id="KW-0464">Manganese</keyword>
<keyword id="KW-0479">Metal-binding</keyword>
<keyword id="KW-0520">NAD</keyword>
<keyword id="KW-0560">Oxidoreductase</keyword>
<keyword id="KW-0597">Phosphoprotein</keyword>
<keyword id="KW-0934">Plastid</keyword>
<keyword id="KW-1185">Reference proteome</keyword>
<keyword id="KW-0809">Transit peptide</keyword>
<dbReference type="EC" id="1.1.1.85" evidence="4 5"/>
<dbReference type="EMBL" id="Y10216">
    <property type="protein sequence ID" value="CAA71268.1"/>
    <property type="molecule type" value="mRNA"/>
</dbReference>
<dbReference type="EMBL" id="AC018849">
    <property type="protein sequence ID" value="AAF27137.1"/>
    <property type="molecule type" value="Genomic_DNA"/>
</dbReference>
<dbReference type="EMBL" id="CP002684">
    <property type="protein sequence ID" value="AEE36420.1"/>
    <property type="molecule type" value="Genomic_DNA"/>
</dbReference>
<dbReference type="EMBL" id="AY062441">
    <property type="protein sequence ID" value="AAL32519.1"/>
    <property type="molecule type" value="mRNA"/>
</dbReference>
<dbReference type="EMBL" id="AY114627">
    <property type="protein sequence ID" value="AAM47946.1"/>
    <property type="molecule type" value="mRNA"/>
</dbReference>
<dbReference type="PIR" id="F96837">
    <property type="entry name" value="F96837"/>
</dbReference>
<dbReference type="RefSeq" id="NP_178171.1">
    <property type="nucleotide sequence ID" value="NM_106704.4"/>
</dbReference>
<dbReference type="PDB" id="3R8W">
    <property type="method" value="X-ray"/>
    <property type="resolution" value="2.25 A"/>
    <property type="chains" value="A/B/C/D=1-405"/>
</dbReference>
<dbReference type="PDB" id="5J32">
    <property type="method" value="X-ray"/>
    <property type="resolution" value="1.93 A"/>
    <property type="chains" value="A/B/C/D=39-405"/>
</dbReference>
<dbReference type="PDB" id="5J33">
    <property type="method" value="X-ray"/>
    <property type="resolution" value="3.49 A"/>
    <property type="chains" value="A/B/C/D/E/F/G/H=1-405"/>
</dbReference>
<dbReference type="PDB" id="5J34">
    <property type="method" value="X-ray"/>
    <property type="resolution" value="1.83 A"/>
    <property type="chains" value="A/B/C/D=1-405"/>
</dbReference>
<dbReference type="PDBsum" id="3R8W"/>
<dbReference type="PDBsum" id="5J32"/>
<dbReference type="PDBsum" id="5J33"/>
<dbReference type="PDBsum" id="5J34"/>
<dbReference type="SMR" id="P93832"/>
<dbReference type="BioGRID" id="29613">
    <property type="interactions" value="22"/>
</dbReference>
<dbReference type="FunCoup" id="P93832">
    <property type="interactions" value="1302"/>
</dbReference>
<dbReference type="IntAct" id="P93832">
    <property type="interactions" value="1"/>
</dbReference>
<dbReference type="STRING" id="3702.P93832"/>
<dbReference type="iPTMnet" id="P93832"/>
<dbReference type="PaxDb" id="3702-AT1G80560.1"/>
<dbReference type="ProteomicsDB" id="237162"/>
<dbReference type="EnsemblPlants" id="AT1G80560.1">
    <property type="protein sequence ID" value="AT1G80560.1"/>
    <property type="gene ID" value="AT1G80560"/>
</dbReference>
<dbReference type="GeneID" id="844395"/>
<dbReference type="Gramene" id="AT1G80560.1">
    <property type="protein sequence ID" value="AT1G80560.1"/>
    <property type="gene ID" value="AT1G80560"/>
</dbReference>
<dbReference type="KEGG" id="ath:AT1G80560"/>
<dbReference type="Araport" id="AT1G80560"/>
<dbReference type="TAIR" id="AT1G80560">
    <property type="gene designation" value="IMD2"/>
</dbReference>
<dbReference type="eggNOG" id="KOG0786">
    <property type="taxonomic scope" value="Eukaryota"/>
</dbReference>
<dbReference type="HOGENOM" id="CLU_031953_0_3_1"/>
<dbReference type="InParanoid" id="P93832"/>
<dbReference type="OMA" id="EYDLGAR"/>
<dbReference type="PhylomeDB" id="P93832"/>
<dbReference type="BRENDA" id="1.1.1.85">
    <property type="organism ID" value="399"/>
</dbReference>
<dbReference type="UniPathway" id="UPA00048">
    <property type="reaction ID" value="UER00072"/>
</dbReference>
<dbReference type="EvolutionaryTrace" id="P93832"/>
<dbReference type="PRO" id="PR:P93832"/>
<dbReference type="Proteomes" id="UP000006548">
    <property type="component" value="Chromosome 1"/>
</dbReference>
<dbReference type="ExpressionAtlas" id="P93832">
    <property type="expression patterns" value="baseline and differential"/>
</dbReference>
<dbReference type="GO" id="GO:0009507">
    <property type="term" value="C:chloroplast"/>
    <property type="evidence" value="ECO:0007005"/>
    <property type="project" value="TAIR"/>
</dbReference>
<dbReference type="GO" id="GO:0009941">
    <property type="term" value="C:chloroplast envelope"/>
    <property type="evidence" value="ECO:0007005"/>
    <property type="project" value="TAIR"/>
</dbReference>
<dbReference type="GO" id="GO:0009570">
    <property type="term" value="C:chloroplast stroma"/>
    <property type="evidence" value="ECO:0007005"/>
    <property type="project" value="TAIR"/>
</dbReference>
<dbReference type="GO" id="GO:0005829">
    <property type="term" value="C:cytosol"/>
    <property type="evidence" value="ECO:0007005"/>
    <property type="project" value="TAIR"/>
</dbReference>
<dbReference type="GO" id="GO:0009536">
    <property type="term" value="C:plastid"/>
    <property type="evidence" value="ECO:0000250"/>
    <property type="project" value="TAIR"/>
</dbReference>
<dbReference type="GO" id="GO:0003862">
    <property type="term" value="F:3-isopropylmalate dehydrogenase activity"/>
    <property type="evidence" value="ECO:0000314"/>
    <property type="project" value="UniProtKB"/>
</dbReference>
<dbReference type="GO" id="GO:0000287">
    <property type="term" value="F:magnesium ion binding"/>
    <property type="evidence" value="ECO:0007669"/>
    <property type="project" value="InterPro"/>
</dbReference>
<dbReference type="GO" id="GO:0070403">
    <property type="term" value="F:NAD+ binding"/>
    <property type="evidence" value="ECO:0000314"/>
    <property type="project" value="UniProtKB"/>
</dbReference>
<dbReference type="GO" id="GO:0042803">
    <property type="term" value="F:protein homodimerization activity"/>
    <property type="evidence" value="ECO:0000314"/>
    <property type="project" value="UniProtKB"/>
</dbReference>
<dbReference type="GO" id="GO:0009553">
    <property type="term" value="P:embryo sac development"/>
    <property type="evidence" value="ECO:0000315"/>
    <property type="project" value="UniProtKB"/>
</dbReference>
<dbReference type="GO" id="GO:0009098">
    <property type="term" value="P:L-leucine biosynthetic process"/>
    <property type="evidence" value="ECO:0000314"/>
    <property type="project" value="UniProtKB"/>
</dbReference>
<dbReference type="GO" id="GO:0009555">
    <property type="term" value="P:pollen development"/>
    <property type="evidence" value="ECO:0000315"/>
    <property type="project" value="UniProtKB"/>
</dbReference>
<dbReference type="FunFam" id="3.40.718.10:FF:000004">
    <property type="entry name" value="3-isopropylmalate dehydrogenase"/>
    <property type="match status" value="1"/>
</dbReference>
<dbReference type="Gene3D" id="3.40.718.10">
    <property type="entry name" value="Isopropylmalate Dehydrogenase"/>
    <property type="match status" value="1"/>
</dbReference>
<dbReference type="HAMAP" id="MF_01033">
    <property type="entry name" value="LeuB_type1"/>
    <property type="match status" value="1"/>
</dbReference>
<dbReference type="InterPro" id="IPR019818">
    <property type="entry name" value="IsoCit/isopropylmalate_DH_CS"/>
</dbReference>
<dbReference type="InterPro" id="IPR024084">
    <property type="entry name" value="IsoPropMal-DH-like_dom"/>
</dbReference>
<dbReference type="InterPro" id="IPR004429">
    <property type="entry name" value="Isopropylmalate_DH"/>
</dbReference>
<dbReference type="NCBIfam" id="TIGR00169">
    <property type="entry name" value="leuB"/>
    <property type="match status" value="1"/>
</dbReference>
<dbReference type="PANTHER" id="PTHR42979">
    <property type="entry name" value="3-ISOPROPYLMALATE DEHYDROGENASE"/>
    <property type="match status" value="1"/>
</dbReference>
<dbReference type="PANTHER" id="PTHR42979:SF1">
    <property type="entry name" value="3-ISOPROPYLMALATE DEHYDROGENASE"/>
    <property type="match status" value="1"/>
</dbReference>
<dbReference type="Pfam" id="PF00180">
    <property type="entry name" value="Iso_dh"/>
    <property type="match status" value="1"/>
</dbReference>
<dbReference type="SMART" id="SM01329">
    <property type="entry name" value="Iso_dh"/>
    <property type="match status" value="1"/>
</dbReference>
<dbReference type="SUPFAM" id="SSF53659">
    <property type="entry name" value="Isocitrate/Isopropylmalate dehydrogenase-like"/>
    <property type="match status" value="1"/>
</dbReference>
<dbReference type="PROSITE" id="PS00470">
    <property type="entry name" value="IDH_IMDH"/>
    <property type="match status" value="1"/>
</dbReference>
<evidence type="ECO:0000250" key="1">
    <source>
        <dbReference type="UniProtKB" id="P50455"/>
    </source>
</evidence>
<evidence type="ECO:0000250" key="2">
    <source>
        <dbReference type="UniProtKB" id="Q9FMT1"/>
    </source>
</evidence>
<evidence type="ECO:0000255" key="3"/>
<evidence type="ECO:0000269" key="4">
    <source>
    </source>
</evidence>
<evidence type="ECO:0000269" key="5">
    <source>
    </source>
</evidence>
<evidence type="ECO:0000269" key="6">
    <source>
    </source>
</evidence>
<evidence type="ECO:0000269" key="7">
    <source>
    </source>
</evidence>
<evidence type="ECO:0000303" key="8">
    <source>
    </source>
</evidence>
<evidence type="ECO:0000303" key="9">
    <source>
    </source>
</evidence>
<evidence type="ECO:0000303" key="10">
    <source>
    </source>
</evidence>
<evidence type="ECO:0000303" key="11">
    <source>
    </source>
</evidence>
<evidence type="ECO:0000303" key="12">
    <source ref="1"/>
</evidence>
<evidence type="ECO:0000305" key="13"/>
<evidence type="ECO:0000312" key="14">
    <source>
        <dbReference type="Araport" id="AT1G80560"/>
    </source>
</evidence>
<evidence type="ECO:0000312" key="15">
    <source>
        <dbReference type="EMBL" id="AAF27137.1"/>
    </source>
</evidence>
<evidence type="ECO:0007744" key="16">
    <source>
        <dbReference type="PDB" id="5J32"/>
    </source>
</evidence>
<evidence type="ECO:0007744" key="17">
    <source>
        <dbReference type="PDB" id="5J33"/>
    </source>
</evidence>
<evidence type="ECO:0007744" key="18">
    <source>
        <dbReference type="PDB" id="5J34"/>
    </source>
</evidence>
<evidence type="ECO:0007829" key="19">
    <source>
        <dbReference type="PDB" id="5J33"/>
    </source>
</evidence>
<evidence type="ECO:0007829" key="20">
    <source>
        <dbReference type="PDB" id="5J34"/>
    </source>
</evidence>
<sequence length="405" mass="43371">MAAALQTNIRTVKVPATFRAVSKQSLAPFRVRCAVASPGKKRYTITLLPGDGIGPEVVSIAKNVLQQAGSLEGVEFNFREMPIGGAALDLVGVPLPEETISAAKESDAVLLGAIGGYKWDNNEKHLRPEKGLLQIRAALKVFANLRPATVLPQLVDASTLKREVAEGVDLMVVRELTGGIYFGEPRGIKTNENGEEVGFNTEVYAAHEIDRIARVAFETARKRRGKLCSVDKANVLEASILWRKRVTALASEYPDVELSHMYVDNAAMQLVRDPKQFDTIVTNNIFGDILSDEASMITGSIGMLPSASLSDSGPGLFEPIHGSAPDIAGQDKANPLATILSAAMLLKYGLGEEKAAKRIEDAVLVALNNGFRTGDIYSAGTKLVGCKEMGEEVLKSVDSQVPASV</sequence>
<name>LEU32_ARATH</name>